<comment type="function">
    <text evidence="1">Involved in the regulation of the intracellular balance of NAD and NADP, and is a key enzyme in the biosynthesis of NADP. Catalyzes specifically the phosphorylation on 2'-hydroxyl of the adenosine moiety of NAD to yield NADP.</text>
</comment>
<comment type="catalytic activity">
    <reaction evidence="1">
        <text>NAD(+) + ATP = ADP + NADP(+) + H(+)</text>
        <dbReference type="Rhea" id="RHEA:18629"/>
        <dbReference type="ChEBI" id="CHEBI:15378"/>
        <dbReference type="ChEBI" id="CHEBI:30616"/>
        <dbReference type="ChEBI" id="CHEBI:57540"/>
        <dbReference type="ChEBI" id="CHEBI:58349"/>
        <dbReference type="ChEBI" id="CHEBI:456216"/>
        <dbReference type="EC" id="2.7.1.23"/>
    </reaction>
</comment>
<comment type="cofactor">
    <cofactor evidence="1">
        <name>a divalent metal cation</name>
        <dbReference type="ChEBI" id="CHEBI:60240"/>
    </cofactor>
</comment>
<comment type="subcellular location">
    <subcellularLocation>
        <location evidence="1">Cytoplasm</location>
    </subcellularLocation>
</comment>
<comment type="similarity">
    <text evidence="1">Belongs to the NAD kinase family.</text>
</comment>
<name>NADK_RICCK</name>
<gene>
    <name evidence="1" type="primary">nadK</name>
    <name type="ordered locus">A1E_03130</name>
</gene>
<evidence type="ECO:0000255" key="1">
    <source>
        <dbReference type="HAMAP-Rule" id="MF_00361"/>
    </source>
</evidence>
<accession>A8EYX8</accession>
<feature type="chain" id="PRO_1000005440" description="NAD kinase">
    <location>
        <begin position="1"/>
        <end position="255"/>
    </location>
</feature>
<feature type="active site" description="Proton acceptor" evidence="1">
    <location>
        <position position="44"/>
    </location>
</feature>
<feature type="binding site" evidence="1">
    <location>
        <begin position="44"/>
        <end position="45"/>
    </location>
    <ligand>
        <name>NAD(+)</name>
        <dbReference type="ChEBI" id="CHEBI:57540"/>
    </ligand>
</feature>
<feature type="binding site" evidence="1">
    <location>
        <position position="49"/>
    </location>
    <ligand>
        <name>NAD(+)</name>
        <dbReference type="ChEBI" id="CHEBI:57540"/>
    </ligand>
</feature>
<feature type="binding site" evidence="1">
    <location>
        <begin position="114"/>
        <end position="115"/>
    </location>
    <ligand>
        <name>NAD(+)</name>
        <dbReference type="ChEBI" id="CHEBI:57540"/>
    </ligand>
</feature>
<feature type="binding site" evidence="1">
    <location>
        <position position="144"/>
    </location>
    <ligand>
        <name>NAD(+)</name>
        <dbReference type="ChEBI" id="CHEBI:57540"/>
    </ligand>
</feature>
<feature type="binding site" evidence="1">
    <location>
        <position position="152"/>
    </location>
    <ligand>
        <name>NAD(+)</name>
        <dbReference type="ChEBI" id="CHEBI:57540"/>
    </ligand>
</feature>
<feature type="binding site" evidence="1">
    <location>
        <begin position="155"/>
        <end position="160"/>
    </location>
    <ligand>
        <name>NAD(+)</name>
        <dbReference type="ChEBI" id="CHEBI:57540"/>
    </ligand>
</feature>
<feature type="binding site" evidence="1">
    <location>
        <position position="216"/>
    </location>
    <ligand>
        <name>NAD(+)</name>
        <dbReference type="ChEBI" id="CHEBI:57540"/>
    </ligand>
</feature>
<sequence length="255" mass="28332">MNINKIALIYNKDYKSLAIIEEIKKLYNYCEVEEAEVIIVIGGDGALLHNIHCYMHLNIPFYGVNLGSLGFLMNTLDTKNLLQNIHDSTVTILNPLLMQAKDTSGQIYTALAINEVSIFRKTNQAAKFRIDVNGIERMSELVADGALVATPAGSSAYNLSAGGPILPLESNMLCLTPICAFRPRRWHGALLLSSATIKFEIFNTTKRPVNATADFQEFNNIIQVTVSSTKDKPIKLLFNKNHTLEDRIIKEQFGG</sequence>
<reference key="1">
    <citation type="submission" date="2007-09" db="EMBL/GenBank/DDBJ databases">
        <title>Complete genome sequence of Rickettsia canadensis.</title>
        <authorList>
            <person name="Madan A."/>
            <person name="Fahey J."/>
            <person name="Helton E."/>
            <person name="Ketteman M."/>
            <person name="Madan A."/>
            <person name="Rodrigues S."/>
            <person name="Sanchez A."/>
            <person name="Whiting M."/>
            <person name="Dasch G."/>
            <person name="Eremeeva M."/>
        </authorList>
    </citation>
    <scope>NUCLEOTIDE SEQUENCE [LARGE SCALE GENOMIC DNA]</scope>
    <source>
        <strain>McKiel</strain>
    </source>
</reference>
<organism>
    <name type="scientific">Rickettsia canadensis (strain McKiel)</name>
    <dbReference type="NCBI Taxonomy" id="293613"/>
    <lineage>
        <taxon>Bacteria</taxon>
        <taxon>Pseudomonadati</taxon>
        <taxon>Pseudomonadota</taxon>
        <taxon>Alphaproteobacteria</taxon>
        <taxon>Rickettsiales</taxon>
        <taxon>Rickettsiaceae</taxon>
        <taxon>Rickettsieae</taxon>
        <taxon>Rickettsia</taxon>
        <taxon>belli group</taxon>
    </lineage>
</organism>
<proteinExistence type="inferred from homology"/>
<dbReference type="EC" id="2.7.1.23" evidence="1"/>
<dbReference type="EMBL" id="CP000409">
    <property type="protein sequence ID" value="ABV73561.1"/>
    <property type="molecule type" value="Genomic_DNA"/>
</dbReference>
<dbReference type="RefSeq" id="WP_012148757.1">
    <property type="nucleotide sequence ID" value="NC_009879.1"/>
</dbReference>
<dbReference type="SMR" id="A8EYX8"/>
<dbReference type="STRING" id="293613.A1E_03130"/>
<dbReference type="KEGG" id="rcm:A1E_03130"/>
<dbReference type="eggNOG" id="COG0061">
    <property type="taxonomic scope" value="Bacteria"/>
</dbReference>
<dbReference type="HOGENOM" id="CLU_073319_0_0_5"/>
<dbReference type="Proteomes" id="UP000007056">
    <property type="component" value="Chromosome"/>
</dbReference>
<dbReference type="GO" id="GO:0005737">
    <property type="term" value="C:cytoplasm"/>
    <property type="evidence" value="ECO:0007669"/>
    <property type="project" value="UniProtKB-SubCell"/>
</dbReference>
<dbReference type="GO" id="GO:0005524">
    <property type="term" value="F:ATP binding"/>
    <property type="evidence" value="ECO:0007669"/>
    <property type="project" value="UniProtKB-KW"/>
</dbReference>
<dbReference type="GO" id="GO:0046872">
    <property type="term" value="F:metal ion binding"/>
    <property type="evidence" value="ECO:0007669"/>
    <property type="project" value="UniProtKB-UniRule"/>
</dbReference>
<dbReference type="GO" id="GO:0051287">
    <property type="term" value="F:NAD binding"/>
    <property type="evidence" value="ECO:0007669"/>
    <property type="project" value="UniProtKB-ARBA"/>
</dbReference>
<dbReference type="GO" id="GO:0003951">
    <property type="term" value="F:NAD+ kinase activity"/>
    <property type="evidence" value="ECO:0007669"/>
    <property type="project" value="UniProtKB-UniRule"/>
</dbReference>
<dbReference type="GO" id="GO:0019674">
    <property type="term" value="P:NAD metabolic process"/>
    <property type="evidence" value="ECO:0007669"/>
    <property type="project" value="InterPro"/>
</dbReference>
<dbReference type="GO" id="GO:0006741">
    <property type="term" value="P:NADP biosynthetic process"/>
    <property type="evidence" value="ECO:0007669"/>
    <property type="project" value="UniProtKB-UniRule"/>
</dbReference>
<dbReference type="Gene3D" id="3.40.50.10330">
    <property type="entry name" value="Probable inorganic polyphosphate/atp-NAD kinase, domain 1"/>
    <property type="match status" value="1"/>
</dbReference>
<dbReference type="Gene3D" id="2.60.200.30">
    <property type="entry name" value="Probable inorganic polyphosphate/atp-NAD kinase, domain 2"/>
    <property type="match status" value="1"/>
</dbReference>
<dbReference type="HAMAP" id="MF_00361">
    <property type="entry name" value="NAD_kinase"/>
    <property type="match status" value="1"/>
</dbReference>
<dbReference type="InterPro" id="IPR017438">
    <property type="entry name" value="ATP-NAD_kinase_N"/>
</dbReference>
<dbReference type="InterPro" id="IPR017437">
    <property type="entry name" value="ATP-NAD_kinase_PpnK-typ_C"/>
</dbReference>
<dbReference type="InterPro" id="IPR016064">
    <property type="entry name" value="NAD/diacylglycerol_kinase_sf"/>
</dbReference>
<dbReference type="InterPro" id="IPR002504">
    <property type="entry name" value="NADK"/>
</dbReference>
<dbReference type="NCBIfam" id="NF003406">
    <property type="entry name" value="PRK04761.1"/>
    <property type="match status" value="1"/>
</dbReference>
<dbReference type="PANTHER" id="PTHR20275">
    <property type="entry name" value="NAD KINASE"/>
    <property type="match status" value="1"/>
</dbReference>
<dbReference type="PANTHER" id="PTHR20275:SF0">
    <property type="entry name" value="NAD KINASE"/>
    <property type="match status" value="1"/>
</dbReference>
<dbReference type="Pfam" id="PF01513">
    <property type="entry name" value="NAD_kinase"/>
    <property type="match status" value="1"/>
</dbReference>
<dbReference type="Pfam" id="PF20143">
    <property type="entry name" value="NAD_kinase_C"/>
    <property type="match status" value="1"/>
</dbReference>
<dbReference type="SUPFAM" id="SSF111331">
    <property type="entry name" value="NAD kinase/diacylglycerol kinase-like"/>
    <property type="match status" value="1"/>
</dbReference>
<protein>
    <recommendedName>
        <fullName evidence="1">NAD kinase</fullName>
        <ecNumber evidence="1">2.7.1.23</ecNumber>
    </recommendedName>
    <alternativeName>
        <fullName evidence="1">ATP-dependent NAD kinase</fullName>
    </alternativeName>
</protein>
<keyword id="KW-0067">ATP-binding</keyword>
<keyword id="KW-0963">Cytoplasm</keyword>
<keyword id="KW-0418">Kinase</keyword>
<keyword id="KW-0520">NAD</keyword>
<keyword id="KW-0521">NADP</keyword>
<keyword id="KW-0547">Nucleotide-binding</keyword>
<keyword id="KW-0808">Transferase</keyword>